<evidence type="ECO:0000255" key="1">
    <source>
        <dbReference type="HAMAP-Rule" id="MF_01810"/>
    </source>
</evidence>
<comment type="function">
    <text evidence="1">Required for the insertion and/or proper folding and/or complex formation of integral membrane proteins into the membrane. Involved in integration of membrane proteins that insert both dependently and independently of the Sec translocase complex, as well as at least some lipoproteins. Aids folding of multispanning membrane proteins.</text>
</comment>
<comment type="subunit">
    <text evidence="1">Interacts with the Sec translocase complex via SecD. Specifically interacts with transmembrane segments of nascent integral membrane proteins during membrane integration.</text>
</comment>
<comment type="subcellular location">
    <subcellularLocation>
        <location evidence="1">Cell inner membrane</location>
        <topology evidence="1">Multi-pass membrane protein</topology>
    </subcellularLocation>
</comment>
<comment type="similarity">
    <text evidence="1">Belongs to the OXA1/ALB3/YidC family. Type 1 subfamily.</text>
</comment>
<dbReference type="EMBL" id="CP001205">
    <property type="protein sequence ID" value="ACK74670.1"/>
    <property type="molecule type" value="Genomic_DNA"/>
</dbReference>
<dbReference type="RefSeq" id="WP_002657916.1">
    <property type="nucleotide sequence ID" value="NC_011728.1"/>
</dbReference>
<dbReference type="SMR" id="B7J208"/>
<dbReference type="GeneID" id="56567873"/>
<dbReference type="KEGG" id="bbz:BbuZS7_0448"/>
<dbReference type="HOGENOM" id="CLU_016535_2_0_12"/>
<dbReference type="Proteomes" id="UP000006901">
    <property type="component" value="Chromosome"/>
</dbReference>
<dbReference type="GO" id="GO:0005886">
    <property type="term" value="C:plasma membrane"/>
    <property type="evidence" value="ECO:0007669"/>
    <property type="project" value="UniProtKB-SubCell"/>
</dbReference>
<dbReference type="GO" id="GO:0032977">
    <property type="term" value="F:membrane insertase activity"/>
    <property type="evidence" value="ECO:0007669"/>
    <property type="project" value="InterPro"/>
</dbReference>
<dbReference type="GO" id="GO:0051205">
    <property type="term" value="P:protein insertion into membrane"/>
    <property type="evidence" value="ECO:0007669"/>
    <property type="project" value="TreeGrafter"/>
</dbReference>
<dbReference type="GO" id="GO:0015031">
    <property type="term" value="P:protein transport"/>
    <property type="evidence" value="ECO:0007669"/>
    <property type="project" value="UniProtKB-KW"/>
</dbReference>
<dbReference type="CDD" id="cd20070">
    <property type="entry name" value="5TM_YidC_Alb3"/>
    <property type="match status" value="1"/>
</dbReference>
<dbReference type="CDD" id="cd19961">
    <property type="entry name" value="EcYidC-like_peri"/>
    <property type="match status" value="1"/>
</dbReference>
<dbReference type="Gene3D" id="2.70.98.90">
    <property type="match status" value="1"/>
</dbReference>
<dbReference type="HAMAP" id="MF_01810">
    <property type="entry name" value="YidC_type1"/>
    <property type="match status" value="1"/>
</dbReference>
<dbReference type="InterPro" id="IPR019998">
    <property type="entry name" value="Membr_insert_YidC"/>
</dbReference>
<dbReference type="InterPro" id="IPR028053">
    <property type="entry name" value="Membr_insert_YidC_N"/>
</dbReference>
<dbReference type="InterPro" id="IPR001708">
    <property type="entry name" value="YidC/ALB3/OXA1/COX18"/>
</dbReference>
<dbReference type="InterPro" id="IPR028055">
    <property type="entry name" value="YidC/Oxa/ALB_C"/>
</dbReference>
<dbReference type="InterPro" id="IPR047196">
    <property type="entry name" value="YidC_ALB_C"/>
</dbReference>
<dbReference type="InterPro" id="IPR038221">
    <property type="entry name" value="YidC_periplasmic_sf"/>
</dbReference>
<dbReference type="NCBIfam" id="NF002358">
    <property type="entry name" value="PRK01318.2-5"/>
    <property type="match status" value="1"/>
</dbReference>
<dbReference type="NCBIfam" id="TIGR03592">
    <property type="entry name" value="yidC_oxa1_cterm"/>
    <property type="match status" value="1"/>
</dbReference>
<dbReference type="PANTHER" id="PTHR12428:SF65">
    <property type="entry name" value="CYTOCHROME C OXIDASE ASSEMBLY PROTEIN COX18, MITOCHONDRIAL"/>
    <property type="match status" value="1"/>
</dbReference>
<dbReference type="PANTHER" id="PTHR12428">
    <property type="entry name" value="OXA1"/>
    <property type="match status" value="1"/>
</dbReference>
<dbReference type="Pfam" id="PF02096">
    <property type="entry name" value="60KD_IMP"/>
    <property type="match status" value="1"/>
</dbReference>
<dbReference type="PRINTS" id="PR00701">
    <property type="entry name" value="60KDINNERMP"/>
</dbReference>
<reference key="1">
    <citation type="journal article" date="2011" name="J. Bacteriol.">
        <title>Whole-genome sequences of thirteen isolates of Borrelia burgdorferi.</title>
        <authorList>
            <person name="Schutzer S.E."/>
            <person name="Fraser-Liggett C.M."/>
            <person name="Casjens S.R."/>
            <person name="Qiu W.G."/>
            <person name="Dunn J.J."/>
            <person name="Mongodin E.F."/>
            <person name="Luft B.J."/>
        </authorList>
    </citation>
    <scope>NUCLEOTIDE SEQUENCE [LARGE SCALE GENOMIC DNA]</scope>
    <source>
        <strain>ZS7</strain>
    </source>
</reference>
<proteinExistence type="inferred from homology"/>
<keyword id="KW-0997">Cell inner membrane</keyword>
<keyword id="KW-1003">Cell membrane</keyword>
<keyword id="KW-0143">Chaperone</keyword>
<keyword id="KW-0472">Membrane</keyword>
<keyword id="KW-0653">Protein transport</keyword>
<keyword id="KW-0812">Transmembrane</keyword>
<keyword id="KW-1133">Transmembrane helix</keyword>
<keyword id="KW-0813">Transport</keyword>
<name>YIDC_BORBZ</name>
<gene>
    <name evidence="1" type="primary">yidC</name>
    <name type="ordered locus">BbuZS7_0448</name>
</gene>
<organism>
    <name type="scientific">Borreliella burgdorferi (strain ZS7)</name>
    <name type="common">Borrelia burgdorferi</name>
    <dbReference type="NCBI Taxonomy" id="445985"/>
    <lineage>
        <taxon>Bacteria</taxon>
        <taxon>Pseudomonadati</taxon>
        <taxon>Spirochaetota</taxon>
        <taxon>Spirochaetia</taxon>
        <taxon>Spirochaetales</taxon>
        <taxon>Borreliaceae</taxon>
        <taxon>Borreliella</taxon>
    </lineage>
</organism>
<sequence>MNQSRRILRTVYLSLFLIGLFMLINDIFSSNILSSKSSDKEVQFDLNKSFDDNEISSVKSNSFNLINKSQDIVVETGIYVATFSTFKGNLVSLKLKNHLNLEKNPTDLINIDRKNETFFDISFDYFVDDLFLYKKIDDFNHEFKAYFKNNGKTYEYVKKYTFSKKDEYLMKFKVTVNGLEDYNLFDFDSYKIIFSSEIERLSDKAKLQYNNYLSQIIYYDNKLKYGKDGLRINNPRWIGSSTKYFGVLVSKENMEVEFKKERGTLKSFIINNVRNKKNISDEFFIYAGPKDNRYLDVFDKRDDNTFGLFDIFFGMSVEKSFWYLIQVPMQMVMQVFYDVIPNWGLSIIFLTIVVRILIFPLTFKGFRATAELSKLQPKMKELQAKFKHDPKKLNEEMGRLYKEEGVNPLGGCLPVILQLPIFFALYSLVNNLFLLRGASFIPGWIDDLSIGDSVYHFGYKLYFVSWTDIRILPFIMMFTQLGSTIVSSNMDLKNLGAQQKFLYFGMPIMFFFILYNMPSGLLIYWITTNIFTILQQYYIKMHLS</sequence>
<feature type="chain" id="PRO_1000187631" description="Membrane protein insertase YidC">
    <location>
        <begin position="1"/>
        <end position="544"/>
    </location>
</feature>
<feature type="transmembrane region" description="Helical" evidence="1">
    <location>
        <begin position="13"/>
        <end position="33"/>
    </location>
</feature>
<feature type="transmembrane region" description="Helical" evidence="1">
    <location>
        <begin position="343"/>
        <end position="363"/>
    </location>
</feature>
<feature type="transmembrane region" description="Helical" evidence="1">
    <location>
        <begin position="409"/>
        <end position="429"/>
    </location>
</feature>
<feature type="transmembrane region" description="Helical" evidence="1">
    <location>
        <begin position="461"/>
        <end position="481"/>
    </location>
</feature>
<feature type="transmembrane region" description="Helical" evidence="1">
    <location>
        <begin position="506"/>
        <end position="526"/>
    </location>
</feature>
<protein>
    <recommendedName>
        <fullName evidence="1">Membrane protein insertase YidC</fullName>
    </recommendedName>
    <alternativeName>
        <fullName evidence="1">Foldase YidC</fullName>
    </alternativeName>
    <alternativeName>
        <fullName evidence="1">Membrane integrase YidC</fullName>
    </alternativeName>
    <alternativeName>
        <fullName evidence="1">Membrane protein YidC</fullName>
    </alternativeName>
</protein>
<accession>B7J208</accession>